<accession>Q7MH07</accession>
<sequence length="438" mass="47821">MANNVVVLGTQWGDEGKGKIVDLLTEDAKYVVRYQGGHNAGHTLVIDGVKTVLHLIPSGILRDNVKCVIGNGVVLSPEALIKEMKPLEERGIPVRERLFISEACPLILPYHVAMDQAREIARGKKAIGTTGRGIGPAYEDKVARRGLRVGDLFDMEAFAEKLKEVMEFHNFQLVNFYKAEAVSYEEVLEQAKGYAELLTSMVIDVTDELDAARKRGDKIMFEGAQGTLLDIDHGTYPYVTSSNTTAGGVAAGSGFGPRYLGYILGIAKAYCTRVGAGPFPTELYDGQEKQDPVGKHLGTVGHEFGATTGRLRRTGWFDAVAMRRAIQINSVSGFCLTKLDVLDGLKELKICTGYQMEDGSVLEVSPMAAEAFEKVTPIYETMPGWSENTFGAKSLEDLPQAAINYIKRIEELTGVPVDIISTGPDRNETIVKVHPFES</sequence>
<protein>
    <recommendedName>
        <fullName evidence="1">Adenylosuccinate synthetase</fullName>
        <shortName evidence="1">AMPSase</shortName>
        <shortName evidence="1">AdSS</shortName>
        <ecNumber evidence="1">6.3.4.4</ecNumber>
    </recommendedName>
    <alternativeName>
        <fullName evidence="1">IMP--aspartate ligase</fullName>
    </alternativeName>
</protein>
<proteinExistence type="inferred from homology"/>
<reference key="1">
    <citation type="journal article" date="2003" name="Genome Res.">
        <title>Comparative genome analysis of Vibrio vulnificus, a marine pathogen.</title>
        <authorList>
            <person name="Chen C.-Y."/>
            <person name="Wu K.-M."/>
            <person name="Chang Y.-C."/>
            <person name="Chang C.-H."/>
            <person name="Tsai H.-C."/>
            <person name="Liao T.-L."/>
            <person name="Liu Y.-M."/>
            <person name="Chen H.-J."/>
            <person name="Shen A.B.-T."/>
            <person name="Li J.-C."/>
            <person name="Su T.-L."/>
            <person name="Shao C.-P."/>
            <person name="Lee C.-T."/>
            <person name="Hor L.-I."/>
            <person name="Tsai S.-F."/>
        </authorList>
    </citation>
    <scope>NUCLEOTIDE SEQUENCE [LARGE SCALE GENOMIC DNA]</scope>
    <source>
        <strain>YJ016</strain>
    </source>
</reference>
<comment type="function">
    <text evidence="1">Plays an important role in the de novo pathway of purine nucleotide biosynthesis. Catalyzes the first committed step in the biosynthesis of AMP from IMP.</text>
</comment>
<comment type="catalytic activity">
    <reaction evidence="1">
        <text>IMP + L-aspartate + GTP = N(6)-(1,2-dicarboxyethyl)-AMP + GDP + phosphate + 2 H(+)</text>
        <dbReference type="Rhea" id="RHEA:15753"/>
        <dbReference type="ChEBI" id="CHEBI:15378"/>
        <dbReference type="ChEBI" id="CHEBI:29991"/>
        <dbReference type="ChEBI" id="CHEBI:37565"/>
        <dbReference type="ChEBI" id="CHEBI:43474"/>
        <dbReference type="ChEBI" id="CHEBI:57567"/>
        <dbReference type="ChEBI" id="CHEBI:58053"/>
        <dbReference type="ChEBI" id="CHEBI:58189"/>
        <dbReference type="EC" id="6.3.4.4"/>
    </reaction>
</comment>
<comment type="cofactor">
    <cofactor evidence="1">
        <name>Mg(2+)</name>
        <dbReference type="ChEBI" id="CHEBI:18420"/>
    </cofactor>
    <text evidence="1">Binds 1 Mg(2+) ion per subunit.</text>
</comment>
<comment type="pathway">
    <text evidence="1">Purine metabolism; AMP biosynthesis via de novo pathway; AMP from IMP: step 1/2.</text>
</comment>
<comment type="subunit">
    <text evidence="1">Homodimer.</text>
</comment>
<comment type="subcellular location">
    <subcellularLocation>
        <location evidence="1">Cytoplasm</location>
    </subcellularLocation>
</comment>
<comment type="similarity">
    <text evidence="1">Belongs to the adenylosuccinate synthetase family.</text>
</comment>
<keyword id="KW-0963">Cytoplasm</keyword>
<keyword id="KW-0342">GTP-binding</keyword>
<keyword id="KW-0436">Ligase</keyword>
<keyword id="KW-0460">Magnesium</keyword>
<keyword id="KW-0479">Metal-binding</keyword>
<keyword id="KW-0547">Nucleotide-binding</keyword>
<keyword id="KW-0658">Purine biosynthesis</keyword>
<name>PURA_VIBVY</name>
<organism>
    <name type="scientific">Vibrio vulnificus (strain YJ016)</name>
    <dbReference type="NCBI Taxonomy" id="196600"/>
    <lineage>
        <taxon>Bacteria</taxon>
        <taxon>Pseudomonadati</taxon>
        <taxon>Pseudomonadota</taxon>
        <taxon>Gammaproteobacteria</taxon>
        <taxon>Vibrionales</taxon>
        <taxon>Vibrionaceae</taxon>
        <taxon>Vibrio</taxon>
    </lineage>
</organism>
<gene>
    <name evidence="1" type="primary">purA</name>
    <name type="ordered locus">VV3066</name>
</gene>
<feature type="chain" id="PRO_0000095257" description="Adenylosuccinate synthetase">
    <location>
        <begin position="1"/>
        <end position="438"/>
    </location>
</feature>
<feature type="active site" description="Proton acceptor" evidence="1">
    <location>
        <position position="14"/>
    </location>
</feature>
<feature type="active site" description="Proton donor" evidence="1">
    <location>
        <position position="42"/>
    </location>
</feature>
<feature type="binding site" evidence="1">
    <location>
        <begin position="13"/>
        <end position="19"/>
    </location>
    <ligand>
        <name>GTP</name>
        <dbReference type="ChEBI" id="CHEBI:37565"/>
    </ligand>
</feature>
<feature type="binding site" description="in other chain" evidence="1">
    <location>
        <begin position="14"/>
        <end position="17"/>
    </location>
    <ligand>
        <name>IMP</name>
        <dbReference type="ChEBI" id="CHEBI:58053"/>
        <note>ligand shared between dimeric partners</note>
    </ligand>
</feature>
<feature type="binding site" evidence="1">
    <location>
        <position position="14"/>
    </location>
    <ligand>
        <name>Mg(2+)</name>
        <dbReference type="ChEBI" id="CHEBI:18420"/>
    </ligand>
</feature>
<feature type="binding site" description="in other chain" evidence="1">
    <location>
        <begin position="39"/>
        <end position="42"/>
    </location>
    <ligand>
        <name>IMP</name>
        <dbReference type="ChEBI" id="CHEBI:58053"/>
        <note>ligand shared between dimeric partners</note>
    </ligand>
</feature>
<feature type="binding site" evidence="1">
    <location>
        <begin position="41"/>
        <end position="43"/>
    </location>
    <ligand>
        <name>GTP</name>
        <dbReference type="ChEBI" id="CHEBI:37565"/>
    </ligand>
</feature>
<feature type="binding site" evidence="1">
    <location>
        <position position="41"/>
    </location>
    <ligand>
        <name>Mg(2+)</name>
        <dbReference type="ChEBI" id="CHEBI:18420"/>
    </ligand>
</feature>
<feature type="binding site" description="in other chain" evidence="1">
    <location>
        <position position="130"/>
    </location>
    <ligand>
        <name>IMP</name>
        <dbReference type="ChEBI" id="CHEBI:58053"/>
        <note>ligand shared between dimeric partners</note>
    </ligand>
</feature>
<feature type="binding site" evidence="1">
    <location>
        <position position="144"/>
    </location>
    <ligand>
        <name>IMP</name>
        <dbReference type="ChEBI" id="CHEBI:58053"/>
        <note>ligand shared between dimeric partners</note>
    </ligand>
</feature>
<feature type="binding site" description="in other chain" evidence="1">
    <location>
        <position position="225"/>
    </location>
    <ligand>
        <name>IMP</name>
        <dbReference type="ChEBI" id="CHEBI:58053"/>
        <note>ligand shared between dimeric partners</note>
    </ligand>
</feature>
<feature type="binding site" description="in other chain" evidence="1">
    <location>
        <position position="240"/>
    </location>
    <ligand>
        <name>IMP</name>
        <dbReference type="ChEBI" id="CHEBI:58053"/>
        <note>ligand shared between dimeric partners</note>
    </ligand>
</feature>
<feature type="binding site" evidence="1">
    <location>
        <begin position="306"/>
        <end position="312"/>
    </location>
    <ligand>
        <name>substrate</name>
    </ligand>
</feature>
<feature type="binding site" description="in other chain" evidence="1">
    <location>
        <position position="310"/>
    </location>
    <ligand>
        <name>IMP</name>
        <dbReference type="ChEBI" id="CHEBI:58053"/>
        <note>ligand shared between dimeric partners</note>
    </ligand>
</feature>
<feature type="binding site" evidence="1">
    <location>
        <position position="312"/>
    </location>
    <ligand>
        <name>GTP</name>
        <dbReference type="ChEBI" id="CHEBI:37565"/>
    </ligand>
</feature>
<feature type="binding site" evidence="1">
    <location>
        <begin position="338"/>
        <end position="340"/>
    </location>
    <ligand>
        <name>GTP</name>
        <dbReference type="ChEBI" id="CHEBI:37565"/>
    </ligand>
</feature>
<feature type="binding site" evidence="1">
    <location>
        <begin position="421"/>
        <end position="423"/>
    </location>
    <ligand>
        <name>GTP</name>
        <dbReference type="ChEBI" id="CHEBI:37565"/>
    </ligand>
</feature>
<dbReference type="EC" id="6.3.4.4" evidence="1"/>
<dbReference type="EMBL" id="BA000037">
    <property type="protein sequence ID" value="BAC95830.1"/>
    <property type="molecule type" value="Genomic_DNA"/>
</dbReference>
<dbReference type="RefSeq" id="WP_011151326.1">
    <property type="nucleotide sequence ID" value="NC_005139.1"/>
</dbReference>
<dbReference type="SMR" id="Q7MH07"/>
<dbReference type="STRING" id="672.VV93_v1c27940"/>
<dbReference type="KEGG" id="vvy:VV3066"/>
<dbReference type="eggNOG" id="COG0104">
    <property type="taxonomic scope" value="Bacteria"/>
</dbReference>
<dbReference type="HOGENOM" id="CLU_029848_0_0_6"/>
<dbReference type="UniPathway" id="UPA00075">
    <property type="reaction ID" value="UER00335"/>
</dbReference>
<dbReference type="Proteomes" id="UP000002675">
    <property type="component" value="Chromosome I"/>
</dbReference>
<dbReference type="GO" id="GO:0005737">
    <property type="term" value="C:cytoplasm"/>
    <property type="evidence" value="ECO:0007669"/>
    <property type="project" value="UniProtKB-SubCell"/>
</dbReference>
<dbReference type="GO" id="GO:0004019">
    <property type="term" value="F:adenylosuccinate synthase activity"/>
    <property type="evidence" value="ECO:0007669"/>
    <property type="project" value="UniProtKB-UniRule"/>
</dbReference>
<dbReference type="GO" id="GO:0005525">
    <property type="term" value="F:GTP binding"/>
    <property type="evidence" value="ECO:0007669"/>
    <property type="project" value="UniProtKB-UniRule"/>
</dbReference>
<dbReference type="GO" id="GO:0000287">
    <property type="term" value="F:magnesium ion binding"/>
    <property type="evidence" value="ECO:0007669"/>
    <property type="project" value="UniProtKB-UniRule"/>
</dbReference>
<dbReference type="GO" id="GO:0044208">
    <property type="term" value="P:'de novo' AMP biosynthetic process"/>
    <property type="evidence" value="ECO:0007669"/>
    <property type="project" value="UniProtKB-UniRule"/>
</dbReference>
<dbReference type="GO" id="GO:0046040">
    <property type="term" value="P:IMP metabolic process"/>
    <property type="evidence" value="ECO:0007669"/>
    <property type="project" value="TreeGrafter"/>
</dbReference>
<dbReference type="CDD" id="cd03108">
    <property type="entry name" value="AdSS"/>
    <property type="match status" value="1"/>
</dbReference>
<dbReference type="FunFam" id="1.10.300.10:FF:000001">
    <property type="entry name" value="Adenylosuccinate synthetase"/>
    <property type="match status" value="1"/>
</dbReference>
<dbReference type="FunFam" id="3.90.170.10:FF:000001">
    <property type="entry name" value="Adenylosuccinate synthetase"/>
    <property type="match status" value="1"/>
</dbReference>
<dbReference type="Gene3D" id="3.40.440.10">
    <property type="entry name" value="Adenylosuccinate Synthetase, subunit A, domain 1"/>
    <property type="match status" value="1"/>
</dbReference>
<dbReference type="Gene3D" id="1.10.300.10">
    <property type="entry name" value="Adenylosuccinate Synthetase, subunit A, domain 2"/>
    <property type="match status" value="1"/>
</dbReference>
<dbReference type="Gene3D" id="3.90.170.10">
    <property type="entry name" value="Adenylosuccinate Synthetase, subunit A, domain 3"/>
    <property type="match status" value="1"/>
</dbReference>
<dbReference type="HAMAP" id="MF_00011">
    <property type="entry name" value="Adenylosucc_synth"/>
    <property type="match status" value="1"/>
</dbReference>
<dbReference type="InterPro" id="IPR018220">
    <property type="entry name" value="Adenylosuccin_syn_GTP-bd"/>
</dbReference>
<dbReference type="InterPro" id="IPR033128">
    <property type="entry name" value="Adenylosuccin_syn_Lys_AS"/>
</dbReference>
<dbReference type="InterPro" id="IPR042109">
    <property type="entry name" value="Adenylosuccinate_synth_dom1"/>
</dbReference>
<dbReference type="InterPro" id="IPR042110">
    <property type="entry name" value="Adenylosuccinate_synth_dom2"/>
</dbReference>
<dbReference type="InterPro" id="IPR042111">
    <property type="entry name" value="Adenylosuccinate_synth_dom3"/>
</dbReference>
<dbReference type="InterPro" id="IPR001114">
    <property type="entry name" value="Adenylosuccinate_synthetase"/>
</dbReference>
<dbReference type="InterPro" id="IPR027417">
    <property type="entry name" value="P-loop_NTPase"/>
</dbReference>
<dbReference type="NCBIfam" id="NF002223">
    <property type="entry name" value="PRK01117.1"/>
    <property type="match status" value="1"/>
</dbReference>
<dbReference type="NCBIfam" id="TIGR00184">
    <property type="entry name" value="purA"/>
    <property type="match status" value="1"/>
</dbReference>
<dbReference type="PANTHER" id="PTHR11846">
    <property type="entry name" value="ADENYLOSUCCINATE SYNTHETASE"/>
    <property type="match status" value="1"/>
</dbReference>
<dbReference type="PANTHER" id="PTHR11846:SF0">
    <property type="entry name" value="ADENYLOSUCCINATE SYNTHETASE"/>
    <property type="match status" value="1"/>
</dbReference>
<dbReference type="Pfam" id="PF00709">
    <property type="entry name" value="Adenylsucc_synt"/>
    <property type="match status" value="1"/>
</dbReference>
<dbReference type="SMART" id="SM00788">
    <property type="entry name" value="Adenylsucc_synt"/>
    <property type="match status" value="1"/>
</dbReference>
<dbReference type="SUPFAM" id="SSF52540">
    <property type="entry name" value="P-loop containing nucleoside triphosphate hydrolases"/>
    <property type="match status" value="1"/>
</dbReference>
<dbReference type="PROSITE" id="PS01266">
    <property type="entry name" value="ADENYLOSUCCIN_SYN_1"/>
    <property type="match status" value="1"/>
</dbReference>
<dbReference type="PROSITE" id="PS00513">
    <property type="entry name" value="ADENYLOSUCCIN_SYN_2"/>
    <property type="match status" value="1"/>
</dbReference>
<evidence type="ECO:0000255" key="1">
    <source>
        <dbReference type="HAMAP-Rule" id="MF_00011"/>
    </source>
</evidence>